<name>RNH_NITV9</name>
<gene>
    <name evidence="1" type="primary">rnhA</name>
    <name type="ordered locus">DvMF_2669</name>
</gene>
<protein>
    <recommendedName>
        <fullName evidence="1">Ribonuclease H</fullName>
        <shortName evidence="1">RNase H</shortName>
        <ecNumber evidence="1">3.1.26.4</ecNumber>
    </recommendedName>
</protein>
<accession>B8DIU7</accession>
<organism>
    <name type="scientific">Nitratidesulfovibrio vulgaris (strain DSM 19637 / Miyazaki F)</name>
    <name type="common">Desulfovibrio vulgaris</name>
    <dbReference type="NCBI Taxonomy" id="883"/>
    <lineage>
        <taxon>Bacteria</taxon>
        <taxon>Pseudomonadati</taxon>
        <taxon>Thermodesulfobacteriota</taxon>
        <taxon>Desulfovibrionia</taxon>
        <taxon>Desulfovibrionales</taxon>
        <taxon>Desulfovibrionaceae</taxon>
        <taxon>Nitratidesulfovibrio</taxon>
    </lineage>
</organism>
<sequence length="156" mass="17574">MTMKNVQAFTDGSCLGNPGPGGWAAVLRCNGSERELSGGFALTTNNRMEILAVIEALALLKEPCGVDLYTDSQYVRNAVEKKWLAGWRRNGWKTSDKKPVKNRDLWERLQPLLDLHQVRFHWVRGHSGHPENERCDVLARTQASSRGLPPDTGYRE</sequence>
<dbReference type="EC" id="3.1.26.4" evidence="1"/>
<dbReference type="EMBL" id="CP001197">
    <property type="protein sequence ID" value="ACL09608.1"/>
    <property type="molecule type" value="Genomic_DNA"/>
</dbReference>
<dbReference type="SMR" id="B8DIU7"/>
<dbReference type="STRING" id="883.DvMF_2669"/>
<dbReference type="KEGG" id="dvm:DvMF_2669"/>
<dbReference type="eggNOG" id="COG0328">
    <property type="taxonomic scope" value="Bacteria"/>
</dbReference>
<dbReference type="HOGENOM" id="CLU_030894_6_2_7"/>
<dbReference type="OrthoDB" id="7845843at2"/>
<dbReference type="GO" id="GO:0005737">
    <property type="term" value="C:cytoplasm"/>
    <property type="evidence" value="ECO:0007669"/>
    <property type="project" value="UniProtKB-SubCell"/>
</dbReference>
<dbReference type="GO" id="GO:0000287">
    <property type="term" value="F:magnesium ion binding"/>
    <property type="evidence" value="ECO:0007669"/>
    <property type="project" value="UniProtKB-UniRule"/>
</dbReference>
<dbReference type="GO" id="GO:0003676">
    <property type="term" value="F:nucleic acid binding"/>
    <property type="evidence" value="ECO:0007669"/>
    <property type="project" value="InterPro"/>
</dbReference>
<dbReference type="GO" id="GO:0004523">
    <property type="term" value="F:RNA-DNA hybrid ribonuclease activity"/>
    <property type="evidence" value="ECO:0007669"/>
    <property type="project" value="UniProtKB-UniRule"/>
</dbReference>
<dbReference type="GO" id="GO:0043137">
    <property type="term" value="P:DNA replication, removal of RNA primer"/>
    <property type="evidence" value="ECO:0007669"/>
    <property type="project" value="TreeGrafter"/>
</dbReference>
<dbReference type="CDD" id="cd09278">
    <property type="entry name" value="RNase_HI_prokaryote_like"/>
    <property type="match status" value="1"/>
</dbReference>
<dbReference type="FunFam" id="3.30.420.10:FF:000089">
    <property type="entry name" value="Ribonuclease H"/>
    <property type="match status" value="1"/>
</dbReference>
<dbReference type="Gene3D" id="3.30.420.10">
    <property type="entry name" value="Ribonuclease H-like superfamily/Ribonuclease H"/>
    <property type="match status" value="1"/>
</dbReference>
<dbReference type="HAMAP" id="MF_00042">
    <property type="entry name" value="RNase_H"/>
    <property type="match status" value="1"/>
</dbReference>
<dbReference type="InterPro" id="IPR050092">
    <property type="entry name" value="RNase_H"/>
</dbReference>
<dbReference type="InterPro" id="IPR012337">
    <property type="entry name" value="RNaseH-like_sf"/>
</dbReference>
<dbReference type="InterPro" id="IPR002156">
    <property type="entry name" value="RNaseH_domain"/>
</dbReference>
<dbReference type="InterPro" id="IPR036397">
    <property type="entry name" value="RNaseH_sf"/>
</dbReference>
<dbReference type="InterPro" id="IPR022892">
    <property type="entry name" value="RNaseHI"/>
</dbReference>
<dbReference type="NCBIfam" id="NF001236">
    <property type="entry name" value="PRK00203.1"/>
    <property type="match status" value="1"/>
</dbReference>
<dbReference type="PANTHER" id="PTHR10642">
    <property type="entry name" value="RIBONUCLEASE H1"/>
    <property type="match status" value="1"/>
</dbReference>
<dbReference type="PANTHER" id="PTHR10642:SF26">
    <property type="entry name" value="RIBONUCLEASE H1"/>
    <property type="match status" value="1"/>
</dbReference>
<dbReference type="Pfam" id="PF00075">
    <property type="entry name" value="RNase_H"/>
    <property type="match status" value="1"/>
</dbReference>
<dbReference type="SUPFAM" id="SSF53098">
    <property type="entry name" value="Ribonuclease H-like"/>
    <property type="match status" value="1"/>
</dbReference>
<dbReference type="PROSITE" id="PS50879">
    <property type="entry name" value="RNASE_H_1"/>
    <property type="match status" value="1"/>
</dbReference>
<keyword id="KW-0963">Cytoplasm</keyword>
<keyword id="KW-0255">Endonuclease</keyword>
<keyword id="KW-0378">Hydrolase</keyword>
<keyword id="KW-0460">Magnesium</keyword>
<keyword id="KW-0479">Metal-binding</keyword>
<keyword id="KW-0540">Nuclease</keyword>
<feature type="chain" id="PRO_1000116576" description="Ribonuclease H">
    <location>
        <begin position="1"/>
        <end position="156"/>
    </location>
</feature>
<feature type="domain" description="RNase H type-1" evidence="2">
    <location>
        <begin position="2"/>
        <end position="144"/>
    </location>
</feature>
<feature type="binding site" evidence="1">
    <location>
        <position position="11"/>
    </location>
    <ligand>
        <name>Mg(2+)</name>
        <dbReference type="ChEBI" id="CHEBI:18420"/>
        <label>1</label>
    </ligand>
</feature>
<feature type="binding site" evidence="1">
    <location>
        <position position="11"/>
    </location>
    <ligand>
        <name>Mg(2+)</name>
        <dbReference type="ChEBI" id="CHEBI:18420"/>
        <label>2</label>
    </ligand>
</feature>
<feature type="binding site" evidence="1">
    <location>
        <position position="49"/>
    </location>
    <ligand>
        <name>Mg(2+)</name>
        <dbReference type="ChEBI" id="CHEBI:18420"/>
        <label>1</label>
    </ligand>
</feature>
<feature type="binding site" evidence="1">
    <location>
        <position position="71"/>
    </location>
    <ligand>
        <name>Mg(2+)</name>
        <dbReference type="ChEBI" id="CHEBI:18420"/>
        <label>1</label>
    </ligand>
</feature>
<feature type="binding site" evidence="1">
    <location>
        <position position="136"/>
    </location>
    <ligand>
        <name>Mg(2+)</name>
        <dbReference type="ChEBI" id="CHEBI:18420"/>
        <label>2</label>
    </ligand>
</feature>
<evidence type="ECO:0000255" key="1">
    <source>
        <dbReference type="HAMAP-Rule" id="MF_00042"/>
    </source>
</evidence>
<evidence type="ECO:0000255" key="2">
    <source>
        <dbReference type="PROSITE-ProRule" id="PRU00408"/>
    </source>
</evidence>
<reference key="1">
    <citation type="submission" date="2008-10" db="EMBL/GenBank/DDBJ databases">
        <title>Complete sequence of Desulfovibrio vulgaris str. 'Miyazaki F'.</title>
        <authorList>
            <person name="Lucas S."/>
            <person name="Copeland A."/>
            <person name="Lapidus A."/>
            <person name="Glavina del Rio T."/>
            <person name="Dalin E."/>
            <person name="Tice H."/>
            <person name="Bruce D."/>
            <person name="Goodwin L."/>
            <person name="Pitluck S."/>
            <person name="Sims D."/>
            <person name="Brettin T."/>
            <person name="Detter J.C."/>
            <person name="Han C."/>
            <person name="Larimer F."/>
            <person name="Land M."/>
            <person name="Hauser L."/>
            <person name="Kyrpides N."/>
            <person name="Mikhailova N."/>
            <person name="Hazen T.C."/>
            <person name="Richardson P."/>
        </authorList>
    </citation>
    <scope>NUCLEOTIDE SEQUENCE [LARGE SCALE GENOMIC DNA]</scope>
    <source>
        <strain>DSM 19637 / Miyazaki F</strain>
    </source>
</reference>
<proteinExistence type="inferred from homology"/>
<comment type="function">
    <text evidence="1">Endonuclease that specifically degrades the RNA of RNA-DNA hybrids.</text>
</comment>
<comment type="catalytic activity">
    <reaction evidence="1">
        <text>Endonucleolytic cleavage to 5'-phosphomonoester.</text>
        <dbReference type="EC" id="3.1.26.4"/>
    </reaction>
</comment>
<comment type="cofactor">
    <cofactor evidence="1">
        <name>Mg(2+)</name>
        <dbReference type="ChEBI" id="CHEBI:18420"/>
    </cofactor>
    <text evidence="1">Binds 1 Mg(2+) ion per subunit. May bind a second metal ion at a regulatory site, or after substrate binding.</text>
</comment>
<comment type="subunit">
    <text evidence="1">Monomer.</text>
</comment>
<comment type="subcellular location">
    <subcellularLocation>
        <location evidence="1">Cytoplasm</location>
    </subcellularLocation>
</comment>
<comment type="similarity">
    <text evidence="1">Belongs to the RNase H family.</text>
</comment>